<name>RL27_BORPA</name>
<evidence type="ECO:0000255" key="1">
    <source>
        <dbReference type="HAMAP-Rule" id="MF_00539"/>
    </source>
</evidence>
<evidence type="ECO:0000256" key="2">
    <source>
        <dbReference type="SAM" id="MobiDB-lite"/>
    </source>
</evidence>
<evidence type="ECO:0000305" key="3"/>
<accession>Q7W1P1</accession>
<gene>
    <name evidence="1" type="primary">rpmA</name>
    <name type="ordered locus">BPP0310</name>
</gene>
<reference key="1">
    <citation type="journal article" date="2003" name="Nat. Genet.">
        <title>Comparative analysis of the genome sequences of Bordetella pertussis, Bordetella parapertussis and Bordetella bronchiseptica.</title>
        <authorList>
            <person name="Parkhill J."/>
            <person name="Sebaihia M."/>
            <person name="Preston A."/>
            <person name="Murphy L.D."/>
            <person name="Thomson N.R."/>
            <person name="Harris D.E."/>
            <person name="Holden M.T.G."/>
            <person name="Churcher C.M."/>
            <person name="Bentley S.D."/>
            <person name="Mungall K.L."/>
            <person name="Cerdeno-Tarraga A.-M."/>
            <person name="Temple L."/>
            <person name="James K.D."/>
            <person name="Harris B."/>
            <person name="Quail M.A."/>
            <person name="Achtman M."/>
            <person name="Atkin R."/>
            <person name="Baker S."/>
            <person name="Basham D."/>
            <person name="Bason N."/>
            <person name="Cherevach I."/>
            <person name="Chillingworth T."/>
            <person name="Collins M."/>
            <person name="Cronin A."/>
            <person name="Davis P."/>
            <person name="Doggett J."/>
            <person name="Feltwell T."/>
            <person name="Goble A."/>
            <person name="Hamlin N."/>
            <person name="Hauser H."/>
            <person name="Holroyd S."/>
            <person name="Jagels K."/>
            <person name="Leather S."/>
            <person name="Moule S."/>
            <person name="Norberczak H."/>
            <person name="O'Neil S."/>
            <person name="Ormond D."/>
            <person name="Price C."/>
            <person name="Rabbinowitsch E."/>
            <person name="Rutter S."/>
            <person name="Sanders M."/>
            <person name="Saunders D."/>
            <person name="Seeger K."/>
            <person name="Sharp S."/>
            <person name="Simmonds M."/>
            <person name="Skelton J."/>
            <person name="Squares R."/>
            <person name="Squares S."/>
            <person name="Stevens K."/>
            <person name="Unwin L."/>
            <person name="Whitehead S."/>
            <person name="Barrell B.G."/>
            <person name="Maskell D.J."/>
        </authorList>
    </citation>
    <scope>NUCLEOTIDE SEQUENCE [LARGE SCALE GENOMIC DNA]</scope>
    <source>
        <strain>12822 / ATCC BAA-587 / NCTC 13253</strain>
    </source>
</reference>
<proteinExistence type="inferred from homology"/>
<sequence length="86" mass="8957">MAQKKGGGSTRNGRDSESKRLGVKVYGGQSILAGSIIVRQRGTRFHPGVNVGVGKDHTLFALANGKVHFSVKGALNKPTVSVVAAE</sequence>
<feature type="chain" id="PRO_0000181054" description="Large ribosomal subunit protein bL27">
    <location>
        <begin position="1"/>
        <end position="86"/>
    </location>
</feature>
<feature type="region of interest" description="Disordered" evidence="2">
    <location>
        <begin position="1"/>
        <end position="20"/>
    </location>
</feature>
<feature type="compositionally biased region" description="Gly residues" evidence="2">
    <location>
        <begin position="1"/>
        <end position="10"/>
    </location>
</feature>
<protein>
    <recommendedName>
        <fullName evidence="1">Large ribosomal subunit protein bL27</fullName>
    </recommendedName>
    <alternativeName>
        <fullName evidence="3">50S ribosomal protein L27</fullName>
    </alternativeName>
</protein>
<dbReference type="EMBL" id="BX640423">
    <property type="protein sequence ID" value="CAE40051.1"/>
    <property type="molecule type" value="Genomic_DNA"/>
</dbReference>
<dbReference type="RefSeq" id="WP_003807460.1">
    <property type="nucleotide sequence ID" value="NC_002928.3"/>
</dbReference>
<dbReference type="SMR" id="Q7W1P1"/>
<dbReference type="GeneID" id="93206541"/>
<dbReference type="KEGG" id="bpa:BPP0310"/>
<dbReference type="HOGENOM" id="CLU_095424_4_1_4"/>
<dbReference type="Proteomes" id="UP000001421">
    <property type="component" value="Chromosome"/>
</dbReference>
<dbReference type="GO" id="GO:0022625">
    <property type="term" value="C:cytosolic large ribosomal subunit"/>
    <property type="evidence" value="ECO:0007669"/>
    <property type="project" value="TreeGrafter"/>
</dbReference>
<dbReference type="GO" id="GO:0003735">
    <property type="term" value="F:structural constituent of ribosome"/>
    <property type="evidence" value="ECO:0007669"/>
    <property type="project" value="InterPro"/>
</dbReference>
<dbReference type="GO" id="GO:0006412">
    <property type="term" value="P:translation"/>
    <property type="evidence" value="ECO:0007669"/>
    <property type="project" value="UniProtKB-UniRule"/>
</dbReference>
<dbReference type="FunFam" id="2.40.50.100:FF:000001">
    <property type="entry name" value="50S ribosomal protein L27"/>
    <property type="match status" value="1"/>
</dbReference>
<dbReference type="Gene3D" id="2.40.50.100">
    <property type="match status" value="1"/>
</dbReference>
<dbReference type="HAMAP" id="MF_00539">
    <property type="entry name" value="Ribosomal_bL27"/>
    <property type="match status" value="1"/>
</dbReference>
<dbReference type="InterPro" id="IPR001684">
    <property type="entry name" value="Ribosomal_bL27"/>
</dbReference>
<dbReference type="InterPro" id="IPR018261">
    <property type="entry name" value="Ribosomal_bL27_CS"/>
</dbReference>
<dbReference type="NCBIfam" id="TIGR00062">
    <property type="entry name" value="L27"/>
    <property type="match status" value="1"/>
</dbReference>
<dbReference type="PANTHER" id="PTHR15893:SF0">
    <property type="entry name" value="LARGE RIBOSOMAL SUBUNIT PROTEIN BL27M"/>
    <property type="match status" value="1"/>
</dbReference>
<dbReference type="PANTHER" id="PTHR15893">
    <property type="entry name" value="RIBOSOMAL PROTEIN L27"/>
    <property type="match status" value="1"/>
</dbReference>
<dbReference type="Pfam" id="PF01016">
    <property type="entry name" value="Ribosomal_L27"/>
    <property type="match status" value="1"/>
</dbReference>
<dbReference type="PRINTS" id="PR00063">
    <property type="entry name" value="RIBOSOMALL27"/>
</dbReference>
<dbReference type="SUPFAM" id="SSF110324">
    <property type="entry name" value="Ribosomal L27 protein-like"/>
    <property type="match status" value="1"/>
</dbReference>
<dbReference type="PROSITE" id="PS00831">
    <property type="entry name" value="RIBOSOMAL_L27"/>
    <property type="match status" value="1"/>
</dbReference>
<comment type="similarity">
    <text evidence="1">Belongs to the bacterial ribosomal protein bL27 family.</text>
</comment>
<organism>
    <name type="scientific">Bordetella parapertussis (strain 12822 / ATCC BAA-587 / NCTC 13253)</name>
    <dbReference type="NCBI Taxonomy" id="257311"/>
    <lineage>
        <taxon>Bacteria</taxon>
        <taxon>Pseudomonadati</taxon>
        <taxon>Pseudomonadota</taxon>
        <taxon>Betaproteobacteria</taxon>
        <taxon>Burkholderiales</taxon>
        <taxon>Alcaligenaceae</taxon>
        <taxon>Bordetella</taxon>
    </lineage>
</organism>
<keyword id="KW-0687">Ribonucleoprotein</keyword>
<keyword id="KW-0689">Ribosomal protein</keyword>